<comment type="function">
    <text evidence="1">Catalyzes the hydrolysis of N-formyl-L-kynurenine to L-kynurenine, the second step in the kynurenine pathway of tryptophan degradation.</text>
</comment>
<comment type="catalytic activity">
    <reaction evidence="1">
        <text>N-formyl-L-kynurenine + H2O = L-kynurenine + formate + H(+)</text>
        <dbReference type="Rhea" id="RHEA:13009"/>
        <dbReference type="ChEBI" id="CHEBI:15377"/>
        <dbReference type="ChEBI" id="CHEBI:15378"/>
        <dbReference type="ChEBI" id="CHEBI:15740"/>
        <dbReference type="ChEBI" id="CHEBI:57959"/>
        <dbReference type="ChEBI" id="CHEBI:58629"/>
        <dbReference type="EC" id="3.5.1.9"/>
    </reaction>
</comment>
<comment type="cofactor">
    <cofactor evidence="1">
        <name>Zn(2+)</name>
        <dbReference type="ChEBI" id="CHEBI:29105"/>
    </cofactor>
    <text evidence="1">Binds 2 zinc ions per subunit.</text>
</comment>
<comment type="pathway">
    <text evidence="1">Amino-acid degradation; L-tryptophan degradation via kynurenine pathway; L-kynurenine from L-tryptophan: step 2/2.</text>
</comment>
<comment type="subunit">
    <text evidence="1">Homodimer.</text>
</comment>
<comment type="similarity">
    <text evidence="1">Belongs to the Cyclase 1 superfamily. KynB family.</text>
</comment>
<evidence type="ECO:0000255" key="1">
    <source>
        <dbReference type="HAMAP-Rule" id="MF_01969"/>
    </source>
</evidence>
<accession>A1TLB1</accession>
<reference key="1">
    <citation type="submission" date="2006-12" db="EMBL/GenBank/DDBJ databases">
        <title>Complete sequence of Acidovorax avenae subsp. citrulli AAC00-1.</title>
        <authorList>
            <person name="Copeland A."/>
            <person name="Lucas S."/>
            <person name="Lapidus A."/>
            <person name="Barry K."/>
            <person name="Detter J.C."/>
            <person name="Glavina del Rio T."/>
            <person name="Dalin E."/>
            <person name="Tice H."/>
            <person name="Pitluck S."/>
            <person name="Kiss H."/>
            <person name="Brettin T."/>
            <person name="Bruce D."/>
            <person name="Han C."/>
            <person name="Tapia R."/>
            <person name="Gilna P."/>
            <person name="Schmutz J."/>
            <person name="Larimer F."/>
            <person name="Land M."/>
            <person name="Hauser L."/>
            <person name="Kyrpides N."/>
            <person name="Kim E."/>
            <person name="Stahl D."/>
            <person name="Richardson P."/>
        </authorList>
    </citation>
    <scope>NUCLEOTIDE SEQUENCE [LARGE SCALE GENOMIC DNA]</scope>
    <source>
        <strain>AAC00-1</strain>
    </source>
</reference>
<name>KYNB_PARC0</name>
<proteinExistence type="inferred from homology"/>
<protein>
    <recommendedName>
        <fullName evidence="1">Kynurenine formamidase</fullName>
        <shortName evidence="1">KFA</shortName>
        <shortName evidence="1">KFase</shortName>
        <ecNumber evidence="1">3.5.1.9</ecNumber>
    </recommendedName>
    <alternativeName>
        <fullName evidence="1">Arylformamidase</fullName>
    </alternativeName>
    <alternativeName>
        <fullName evidence="1">N-formylkynurenine formamidase</fullName>
        <shortName evidence="1">FKF</shortName>
    </alternativeName>
</protein>
<sequence length="216" mass="23230">MTTPRMLWDISAPVHAGSPVFPGDTPYSQQWCATIGPQCPVNVSALAMSPHVGTHADAPLHYDPQGATIGDVPLDAFIGPCRVIHAIGRGPLVAWEHIAHALGADRPALPQRVLVRTYERMPLDRWDAALAAYAPDTIERLADLGVVLVGIDTASIDPADSKSLDSHQVIRRRGLRVLENLVLDEVPEGDYELIALPLKLTTADASPVRAVLRTPA</sequence>
<feature type="chain" id="PRO_0000362086" description="Kynurenine formamidase">
    <location>
        <begin position="1"/>
        <end position="216"/>
    </location>
</feature>
<feature type="active site" description="Proton donor/acceptor" evidence="1">
    <location>
        <position position="61"/>
    </location>
</feature>
<feature type="binding site" evidence="1">
    <location>
        <position position="21"/>
    </location>
    <ligand>
        <name>substrate</name>
    </ligand>
</feature>
<feature type="binding site" evidence="1">
    <location>
        <position position="51"/>
    </location>
    <ligand>
        <name>Zn(2+)</name>
        <dbReference type="ChEBI" id="CHEBI:29105"/>
        <label>1</label>
    </ligand>
</feature>
<feature type="binding site" evidence="1">
    <location>
        <position position="55"/>
    </location>
    <ligand>
        <name>Zn(2+)</name>
        <dbReference type="ChEBI" id="CHEBI:29105"/>
        <label>1</label>
    </ligand>
</feature>
<feature type="binding site" evidence="1">
    <location>
        <position position="57"/>
    </location>
    <ligand>
        <name>Zn(2+)</name>
        <dbReference type="ChEBI" id="CHEBI:29105"/>
        <label>1</label>
    </ligand>
</feature>
<feature type="binding site" evidence="1">
    <location>
        <position position="57"/>
    </location>
    <ligand>
        <name>Zn(2+)</name>
        <dbReference type="ChEBI" id="CHEBI:29105"/>
        <label>2</label>
    </ligand>
</feature>
<feature type="binding site" evidence="1">
    <location>
        <position position="167"/>
    </location>
    <ligand>
        <name>Zn(2+)</name>
        <dbReference type="ChEBI" id="CHEBI:29105"/>
        <label>2</label>
    </ligand>
</feature>
<feature type="binding site" evidence="1">
    <location>
        <position position="179"/>
    </location>
    <ligand>
        <name>Zn(2+)</name>
        <dbReference type="ChEBI" id="CHEBI:29105"/>
        <label>1</label>
    </ligand>
</feature>
<feature type="binding site" evidence="1">
    <location>
        <position position="179"/>
    </location>
    <ligand>
        <name>Zn(2+)</name>
        <dbReference type="ChEBI" id="CHEBI:29105"/>
        <label>2</label>
    </ligand>
</feature>
<dbReference type="EC" id="3.5.1.9" evidence="1"/>
<dbReference type="EMBL" id="CP000512">
    <property type="protein sequence ID" value="ABM31749.1"/>
    <property type="molecule type" value="Genomic_DNA"/>
</dbReference>
<dbReference type="RefSeq" id="WP_011794302.1">
    <property type="nucleotide sequence ID" value="NC_008752.1"/>
</dbReference>
<dbReference type="SMR" id="A1TLB1"/>
<dbReference type="STRING" id="397945.Aave_1157"/>
<dbReference type="GeneID" id="79790815"/>
<dbReference type="KEGG" id="aav:Aave_1157"/>
<dbReference type="eggNOG" id="COG1878">
    <property type="taxonomic scope" value="Bacteria"/>
</dbReference>
<dbReference type="HOGENOM" id="CLU_030671_3_1_4"/>
<dbReference type="OrthoDB" id="9796085at2"/>
<dbReference type="UniPathway" id="UPA00333">
    <property type="reaction ID" value="UER00454"/>
</dbReference>
<dbReference type="Proteomes" id="UP000002596">
    <property type="component" value="Chromosome"/>
</dbReference>
<dbReference type="GO" id="GO:0004061">
    <property type="term" value="F:arylformamidase activity"/>
    <property type="evidence" value="ECO:0000250"/>
    <property type="project" value="UniProtKB"/>
</dbReference>
<dbReference type="GO" id="GO:0004328">
    <property type="term" value="F:formamidase activity"/>
    <property type="evidence" value="ECO:0007669"/>
    <property type="project" value="InterPro"/>
</dbReference>
<dbReference type="GO" id="GO:0008270">
    <property type="term" value="F:zinc ion binding"/>
    <property type="evidence" value="ECO:0007669"/>
    <property type="project" value="UniProtKB-UniRule"/>
</dbReference>
<dbReference type="GO" id="GO:0043420">
    <property type="term" value="P:anthranilate metabolic process"/>
    <property type="evidence" value="ECO:0000250"/>
    <property type="project" value="UniProtKB"/>
</dbReference>
<dbReference type="GO" id="GO:0019441">
    <property type="term" value="P:L-tryptophan catabolic process to kynurenine"/>
    <property type="evidence" value="ECO:0000250"/>
    <property type="project" value="UniProtKB"/>
</dbReference>
<dbReference type="FunFam" id="3.50.30.50:FF:000001">
    <property type="entry name" value="Kynurenine formamidase"/>
    <property type="match status" value="1"/>
</dbReference>
<dbReference type="Gene3D" id="3.50.30.50">
    <property type="entry name" value="Putative cyclase"/>
    <property type="match status" value="1"/>
</dbReference>
<dbReference type="HAMAP" id="MF_01969">
    <property type="entry name" value="KynB"/>
    <property type="match status" value="1"/>
</dbReference>
<dbReference type="InterPro" id="IPR007325">
    <property type="entry name" value="KFase/CYL"/>
</dbReference>
<dbReference type="InterPro" id="IPR037175">
    <property type="entry name" value="KFase_sf"/>
</dbReference>
<dbReference type="InterPro" id="IPR017484">
    <property type="entry name" value="Kynurenine_formamidase_bac"/>
</dbReference>
<dbReference type="NCBIfam" id="TIGR03035">
    <property type="entry name" value="trp_arylform"/>
    <property type="match status" value="1"/>
</dbReference>
<dbReference type="PANTHER" id="PTHR31118">
    <property type="entry name" value="CYCLASE-LIKE PROTEIN 2"/>
    <property type="match status" value="1"/>
</dbReference>
<dbReference type="PANTHER" id="PTHR31118:SF32">
    <property type="entry name" value="KYNURENINE FORMAMIDASE"/>
    <property type="match status" value="1"/>
</dbReference>
<dbReference type="Pfam" id="PF04199">
    <property type="entry name" value="Cyclase"/>
    <property type="match status" value="1"/>
</dbReference>
<dbReference type="SUPFAM" id="SSF102198">
    <property type="entry name" value="Putative cyclase"/>
    <property type="match status" value="1"/>
</dbReference>
<keyword id="KW-0378">Hydrolase</keyword>
<keyword id="KW-0479">Metal-binding</keyword>
<keyword id="KW-0823">Tryptophan catabolism</keyword>
<keyword id="KW-0862">Zinc</keyword>
<organism>
    <name type="scientific">Paracidovorax citrulli (strain AAC00-1)</name>
    <name type="common">Acidovorax citrulli</name>
    <dbReference type="NCBI Taxonomy" id="397945"/>
    <lineage>
        <taxon>Bacteria</taxon>
        <taxon>Pseudomonadati</taxon>
        <taxon>Pseudomonadota</taxon>
        <taxon>Betaproteobacteria</taxon>
        <taxon>Burkholderiales</taxon>
        <taxon>Comamonadaceae</taxon>
        <taxon>Paracidovorax</taxon>
    </lineage>
</organism>
<gene>
    <name evidence="1" type="primary">kynB</name>
    <name type="ordered locus">Aave_1157</name>
</gene>